<evidence type="ECO:0000255" key="1">
    <source>
        <dbReference type="HAMAP-Rule" id="MF_00201"/>
    </source>
</evidence>
<comment type="function">
    <text evidence="1">Involved in DNA repair and RecF pathway recombination.</text>
</comment>
<comment type="similarity">
    <text evidence="1">Belongs to the RecO family.</text>
</comment>
<sequence length="229" mass="25943">MTSKSLNAWVIHKQWSGDTSARLKLFTRELGLINCLCKGGRTPKKQSLLQAFIPLWVSIEERYDQYYTRNIESTSSRLDLEGHSLFSGLYINELLYYTLSPDFPDPDLFDAYLFTLNGIALAREREAIEALLRRFEWALLKACGYTFSFLHEARTGELIVPDSYYQFVAGEGFILGGDKEIPGEHLLAIAADNLSESAYLKSAKFIMRQAINHLLGGREIKARSLYGPA</sequence>
<dbReference type="EMBL" id="AE017354">
    <property type="protein sequence ID" value="AAU27030.1"/>
    <property type="molecule type" value="Genomic_DNA"/>
</dbReference>
<dbReference type="RefSeq" id="WP_010946678.1">
    <property type="nucleotide sequence ID" value="NC_002942.5"/>
</dbReference>
<dbReference type="RefSeq" id="YP_094977.1">
    <property type="nucleotide sequence ID" value="NC_002942.5"/>
</dbReference>
<dbReference type="SMR" id="Q5ZWZ0"/>
<dbReference type="STRING" id="272624.lpg0943"/>
<dbReference type="PaxDb" id="272624-lpg0943"/>
<dbReference type="GeneID" id="57034931"/>
<dbReference type="KEGG" id="lpn:lpg0943"/>
<dbReference type="PATRIC" id="fig|272624.6.peg.975"/>
<dbReference type="eggNOG" id="COG1381">
    <property type="taxonomic scope" value="Bacteria"/>
</dbReference>
<dbReference type="HOGENOM" id="CLU_066645_1_0_6"/>
<dbReference type="OrthoDB" id="9804792at2"/>
<dbReference type="Proteomes" id="UP000000609">
    <property type="component" value="Chromosome"/>
</dbReference>
<dbReference type="GO" id="GO:0043590">
    <property type="term" value="C:bacterial nucleoid"/>
    <property type="evidence" value="ECO:0007669"/>
    <property type="project" value="TreeGrafter"/>
</dbReference>
<dbReference type="GO" id="GO:0006310">
    <property type="term" value="P:DNA recombination"/>
    <property type="evidence" value="ECO:0007669"/>
    <property type="project" value="UniProtKB-UniRule"/>
</dbReference>
<dbReference type="GO" id="GO:0006302">
    <property type="term" value="P:double-strand break repair"/>
    <property type="evidence" value="ECO:0007669"/>
    <property type="project" value="TreeGrafter"/>
</dbReference>
<dbReference type="Gene3D" id="2.40.50.140">
    <property type="entry name" value="Nucleic acid-binding proteins"/>
    <property type="match status" value="1"/>
</dbReference>
<dbReference type="Gene3D" id="1.20.1440.120">
    <property type="entry name" value="Recombination protein O, C-terminal domain"/>
    <property type="match status" value="1"/>
</dbReference>
<dbReference type="HAMAP" id="MF_00201">
    <property type="entry name" value="RecO"/>
    <property type="match status" value="1"/>
</dbReference>
<dbReference type="InterPro" id="IPR037278">
    <property type="entry name" value="ARFGAP/RecO"/>
</dbReference>
<dbReference type="InterPro" id="IPR022572">
    <property type="entry name" value="DNA_rep/recomb_RecO_N"/>
</dbReference>
<dbReference type="InterPro" id="IPR012340">
    <property type="entry name" value="NA-bd_OB-fold"/>
</dbReference>
<dbReference type="InterPro" id="IPR003717">
    <property type="entry name" value="RecO"/>
</dbReference>
<dbReference type="InterPro" id="IPR042242">
    <property type="entry name" value="RecO_C"/>
</dbReference>
<dbReference type="NCBIfam" id="TIGR00613">
    <property type="entry name" value="reco"/>
    <property type="match status" value="1"/>
</dbReference>
<dbReference type="PANTHER" id="PTHR33991">
    <property type="entry name" value="DNA REPAIR PROTEIN RECO"/>
    <property type="match status" value="1"/>
</dbReference>
<dbReference type="PANTHER" id="PTHR33991:SF1">
    <property type="entry name" value="DNA REPAIR PROTEIN RECO"/>
    <property type="match status" value="1"/>
</dbReference>
<dbReference type="Pfam" id="PF02565">
    <property type="entry name" value="RecO_C"/>
    <property type="match status" value="1"/>
</dbReference>
<dbReference type="Pfam" id="PF11967">
    <property type="entry name" value="RecO_N"/>
    <property type="match status" value="1"/>
</dbReference>
<dbReference type="SUPFAM" id="SSF57863">
    <property type="entry name" value="ArfGap/RecO-like zinc finger"/>
    <property type="match status" value="1"/>
</dbReference>
<dbReference type="SUPFAM" id="SSF50249">
    <property type="entry name" value="Nucleic acid-binding proteins"/>
    <property type="match status" value="1"/>
</dbReference>
<accession>Q5ZWZ0</accession>
<proteinExistence type="inferred from homology"/>
<feature type="chain" id="PRO_1000193389" description="DNA repair protein RecO">
    <location>
        <begin position="1"/>
        <end position="229"/>
    </location>
</feature>
<name>RECO_LEGPH</name>
<protein>
    <recommendedName>
        <fullName evidence="1">DNA repair protein RecO</fullName>
    </recommendedName>
    <alternativeName>
        <fullName evidence="1">Recombination protein O</fullName>
    </alternativeName>
</protein>
<gene>
    <name evidence="1" type="primary">recO</name>
    <name type="ordered locus">lpg0943</name>
</gene>
<reference key="1">
    <citation type="journal article" date="2004" name="Science">
        <title>The genomic sequence of the accidental pathogen Legionella pneumophila.</title>
        <authorList>
            <person name="Chien M."/>
            <person name="Morozova I."/>
            <person name="Shi S."/>
            <person name="Sheng H."/>
            <person name="Chen J."/>
            <person name="Gomez S.M."/>
            <person name="Asamani G."/>
            <person name="Hill K."/>
            <person name="Nuara J."/>
            <person name="Feder M."/>
            <person name="Rineer J."/>
            <person name="Greenberg J.J."/>
            <person name="Steshenko V."/>
            <person name="Park S.H."/>
            <person name="Zhao B."/>
            <person name="Teplitskaya E."/>
            <person name="Edwards J.R."/>
            <person name="Pampou S."/>
            <person name="Georghiou A."/>
            <person name="Chou I.-C."/>
            <person name="Iannuccilli W."/>
            <person name="Ulz M.E."/>
            <person name="Kim D.H."/>
            <person name="Geringer-Sameth A."/>
            <person name="Goldsberry C."/>
            <person name="Morozov P."/>
            <person name="Fischer S.G."/>
            <person name="Segal G."/>
            <person name="Qu X."/>
            <person name="Rzhetsky A."/>
            <person name="Zhang P."/>
            <person name="Cayanis E."/>
            <person name="De Jong P.J."/>
            <person name="Ju J."/>
            <person name="Kalachikov S."/>
            <person name="Shuman H.A."/>
            <person name="Russo J.J."/>
        </authorList>
    </citation>
    <scope>NUCLEOTIDE SEQUENCE [LARGE SCALE GENOMIC DNA]</scope>
    <source>
        <strain>Philadelphia 1 / ATCC 33152 / DSM 7513</strain>
    </source>
</reference>
<organism>
    <name type="scientific">Legionella pneumophila subsp. pneumophila (strain Philadelphia 1 / ATCC 33152 / DSM 7513)</name>
    <dbReference type="NCBI Taxonomy" id="272624"/>
    <lineage>
        <taxon>Bacteria</taxon>
        <taxon>Pseudomonadati</taxon>
        <taxon>Pseudomonadota</taxon>
        <taxon>Gammaproteobacteria</taxon>
        <taxon>Legionellales</taxon>
        <taxon>Legionellaceae</taxon>
        <taxon>Legionella</taxon>
    </lineage>
</organism>
<keyword id="KW-0227">DNA damage</keyword>
<keyword id="KW-0233">DNA recombination</keyword>
<keyword id="KW-0234">DNA repair</keyword>
<keyword id="KW-1185">Reference proteome</keyword>